<keyword id="KW-0007">Acetylation</keyword>
<keyword id="KW-0551">Lipid droplet</keyword>
<keyword id="KW-0472">Membrane</keyword>
<keyword id="KW-0597">Phosphoprotein</keyword>
<keyword id="KW-1185">Reference proteome</keyword>
<keyword id="KW-0832">Ubl conjugation</keyword>
<organism>
    <name type="scientific">Mus musculus</name>
    <name type="common">Mouse</name>
    <dbReference type="NCBI Taxonomy" id="10090"/>
    <lineage>
        <taxon>Eukaryota</taxon>
        <taxon>Metazoa</taxon>
        <taxon>Chordata</taxon>
        <taxon>Craniata</taxon>
        <taxon>Vertebrata</taxon>
        <taxon>Euteleostomi</taxon>
        <taxon>Mammalia</taxon>
        <taxon>Eutheria</taxon>
        <taxon>Euarchontoglires</taxon>
        <taxon>Glires</taxon>
        <taxon>Rodentia</taxon>
        <taxon>Myomorpha</taxon>
        <taxon>Muroidea</taxon>
        <taxon>Muridae</taxon>
        <taxon>Murinae</taxon>
        <taxon>Mus</taxon>
        <taxon>Mus</taxon>
    </lineage>
</organism>
<gene>
    <name evidence="12" type="primary">Plin2</name>
    <name type="synonym">Adfp</name>
    <name evidence="8 9" type="synonym">Adrp</name>
</gene>
<reference key="1">
    <citation type="journal article" date="1992" name="Proc. Natl. Acad. Sci. U.S.A.">
        <title>Isolation and characterization of a full-length cDNA coding for an adipose differentiation-related protein.</title>
        <authorList>
            <person name="Jiang H.P."/>
            <person name="Serrero G."/>
        </authorList>
    </citation>
    <scope>NUCLEOTIDE SEQUENCE [MRNA]</scope>
    <scope>TISSUE SPECIFICITY</scope>
    <scope>SUBCELLULAR LOCATION</scope>
    <scope>INDUCTION</scope>
    <source>
        <tissue>Adipocyte</tissue>
    </source>
</reference>
<reference key="2">
    <citation type="journal article" date="1993" name="Genomics">
        <title>Structure of the gene encoding mouse adipose differentiation-related protein (ADRP).</title>
        <authorList>
            <person name="Eisinger D.P."/>
            <person name="Serrero G."/>
        </authorList>
    </citation>
    <scope>NUCLEOTIDE SEQUENCE [GENOMIC DNA]</scope>
    <source>
        <strain>C3H/HeJ</strain>
        <tissue>Adipose tissue</tissue>
    </source>
</reference>
<reference key="3">
    <citation type="journal article" date="2002" name="J. Neurosci.">
        <title>Congenic mapping of alcohol and pentobarbital withdrawal liability loci to a &lt;1 centimorgan interval of murine chromosome 4: identification of Mpdz as a candidate gene.</title>
        <authorList>
            <person name="Fehr C."/>
            <person name="Shirley R.L."/>
            <person name="Belknap J.K."/>
            <person name="Crabbe J.C."/>
            <person name="Buck K.J."/>
        </authorList>
    </citation>
    <scope>NUCLEOTIDE SEQUENCE [MRNA]</scope>
    <source>
        <strain>C57BL/6J</strain>
        <tissue>Brain</tissue>
    </source>
</reference>
<reference key="4">
    <citation type="journal article" date="2005" name="Science">
        <title>The transcriptional landscape of the mammalian genome.</title>
        <authorList>
            <person name="Carninci P."/>
            <person name="Kasukawa T."/>
            <person name="Katayama S."/>
            <person name="Gough J."/>
            <person name="Frith M.C."/>
            <person name="Maeda N."/>
            <person name="Oyama R."/>
            <person name="Ravasi T."/>
            <person name="Lenhard B."/>
            <person name="Wells C."/>
            <person name="Kodzius R."/>
            <person name="Shimokawa K."/>
            <person name="Bajic V.B."/>
            <person name="Brenner S.E."/>
            <person name="Batalov S."/>
            <person name="Forrest A.R."/>
            <person name="Zavolan M."/>
            <person name="Davis M.J."/>
            <person name="Wilming L.G."/>
            <person name="Aidinis V."/>
            <person name="Allen J.E."/>
            <person name="Ambesi-Impiombato A."/>
            <person name="Apweiler R."/>
            <person name="Aturaliya R.N."/>
            <person name="Bailey T.L."/>
            <person name="Bansal M."/>
            <person name="Baxter L."/>
            <person name="Beisel K.W."/>
            <person name="Bersano T."/>
            <person name="Bono H."/>
            <person name="Chalk A.M."/>
            <person name="Chiu K.P."/>
            <person name="Choudhary V."/>
            <person name="Christoffels A."/>
            <person name="Clutterbuck D.R."/>
            <person name="Crowe M.L."/>
            <person name="Dalla E."/>
            <person name="Dalrymple B.P."/>
            <person name="de Bono B."/>
            <person name="Della Gatta G."/>
            <person name="di Bernardo D."/>
            <person name="Down T."/>
            <person name="Engstrom P."/>
            <person name="Fagiolini M."/>
            <person name="Faulkner G."/>
            <person name="Fletcher C.F."/>
            <person name="Fukushima T."/>
            <person name="Furuno M."/>
            <person name="Futaki S."/>
            <person name="Gariboldi M."/>
            <person name="Georgii-Hemming P."/>
            <person name="Gingeras T.R."/>
            <person name="Gojobori T."/>
            <person name="Green R.E."/>
            <person name="Gustincich S."/>
            <person name="Harbers M."/>
            <person name="Hayashi Y."/>
            <person name="Hensch T.K."/>
            <person name="Hirokawa N."/>
            <person name="Hill D."/>
            <person name="Huminiecki L."/>
            <person name="Iacono M."/>
            <person name="Ikeo K."/>
            <person name="Iwama A."/>
            <person name="Ishikawa T."/>
            <person name="Jakt M."/>
            <person name="Kanapin A."/>
            <person name="Katoh M."/>
            <person name="Kawasawa Y."/>
            <person name="Kelso J."/>
            <person name="Kitamura H."/>
            <person name="Kitano H."/>
            <person name="Kollias G."/>
            <person name="Krishnan S.P."/>
            <person name="Kruger A."/>
            <person name="Kummerfeld S.K."/>
            <person name="Kurochkin I.V."/>
            <person name="Lareau L.F."/>
            <person name="Lazarevic D."/>
            <person name="Lipovich L."/>
            <person name="Liu J."/>
            <person name="Liuni S."/>
            <person name="McWilliam S."/>
            <person name="Madan Babu M."/>
            <person name="Madera M."/>
            <person name="Marchionni L."/>
            <person name="Matsuda H."/>
            <person name="Matsuzawa S."/>
            <person name="Miki H."/>
            <person name="Mignone F."/>
            <person name="Miyake S."/>
            <person name="Morris K."/>
            <person name="Mottagui-Tabar S."/>
            <person name="Mulder N."/>
            <person name="Nakano N."/>
            <person name="Nakauchi H."/>
            <person name="Ng P."/>
            <person name="Nilsson R."/>
            <person name="Nishiguchi S."/>
            <person name="Nishikawa S."/>
            <person name="Nori F."/>
            <person name="Ohara O."/>
            <person name="Okazaki Y."/>
            <person name="Orlando V."/>
            <person name="Pang K.C."/>
            <person name="Pavan W.J."/>
            <person name="Pavesi G."/>
            <person name="Pesole G."/>
            <person name="Petrovsky N."/>
            <person name="Piazza S."/>
            <person name="Reed J."/>
            <person name="Reid J.F."/>
            <person name="Ring B.Z."/>
            <person name="Ringwald M."/>
            <person name="Rost B."/>
            <person name="Ruan Y."/>
            <person name="Salzberg S.L."/>
            <person name="Sandelin A."/>
            <person name="Schneider C."/>
            <person name="Schoenbach C."/>
            <person name="Sekiguchi K."/>
            <person name="Semple C.A."/>
            <person name="Seno S."/>
            <person name="Sessa L."/>
            <person name="Sheng Y."/>
            <person name="Shibata Y."/>
            <person name="Shimada H."/>
            <person name="Shimada K."/>
            <person name="Silva D."/>
            <person name="Sinclair B."/>
            <person name="Sperling S."/>
            <person name="Stupka E."/>
            <person name="Sugiura K."/>
            <person name="Sultana R."/>
            <person name="Takenaka Y."/>
            <person name="Taki K."/>
            <person name="Tammoja K."/>
            <person name="Tan S.L."/>
            <person name="Tang S."/>
            <person name="Taylor M.S."/>
            <person name="Tegner J."/>
            <person name="Teichmann S.A."/>
            <person name="Ueda H.R."/>
            <person name="van Nimwegen E."/>
            <person name="Verardo R."/>
            <person name="Wei C.L."/>
            <person name="Yagi K."/>
            <person name="Yamanishi H."/>
            <person name="Zabarovsky E."/>
            <person name="Zhu S."/>
            <person name="Zimmer A."/>
            <person name="Hide W."/>
            <person name="Bult C."/>
            <person name="Grimmond S.M."/>
            <person name="Teasdale R.D."/>
            <person name="Liu E.T."/>
            <person name="Brusic V."/>
            <person name="Quackenbush J."/>
            <person name="Wahlestedt C."/>
            <person name="Mattick J.S."/>
            <person name="Hume D.A."/>
            <person name="Kai C."/>
            <person name="Sasaki D."/>
            <person name="Tomaru Y."/>
            <person name="Fukuda S."/>
            <person name="Kanamori-Katayama M."/>
            <person name="Suzuki M."/>
            <person name="Aoki J."/>
            <person name="Arakawa T."/>
            <person name="Iida J."/>
            <person name="Imamura K."/>
            <person name="Itoh M."/>
            <person name="Kato T."/>
            <person name="Kawaji H."/>
            <person name="Kawagashira N."/>
            <person name="Kawashima T."/>
            <person name="Kojima M."/>
            <person name="Kondo S."/>
            <person name="Konno H."/>
            <person name="Nakano K."/>
            <person name="Ninomiya N."/>
            <person name="Nishio T."/>
            <person name="Okada M."/>
            <person name="Plessy C."/>
            <person name="Shibata K."/>
            <person name="Shiraki T."/>
            <person name="Suzuki S."/>
            <person name="Tagami M."/>
            <person name="Waki K."/>
            <person name="Watahiki A."/>
            <person name="Okamura-Oho Y."/>
            <person name="Suzuki H."/>
            <person name="Kawai J."/>
            <person name="Hayashizaki Y."/>
        </authorList>
    </citation>
    <scope>NUCLEOTIDE SEQUENCE [LARGE SCALE MRNA]</scope>
    <source>
        <strain>C57BL/6J</strain>
        <strain>NOD</strain>
        <tissue>Bone marrow</tissue>
    </source>
</reference>
<reference key="5">
    <citation type="journal article" date="2009" name="PLoS Biol.">
        <title>Lineage-specific biology revealed by a finished genome assembly of the mouse.</title>
        <authorList>
            <person name="Church D.M."/>
            <person name="Goodstadt L."/>
            <person name="Hillier L.W."/>
            <person name="Zody M.C."/>
            <person name="Goldstein S."/>
            <person name="She X."/>
            <person name="Bult C.J."/>
            <person name="Agarwala R."/>
            <person name="Cherry J.L."/>
            <person name="DiCuccio M."/>
            <person name="Hlavina W."/>
            <person name="Kapustin Y."/>
            <person name="Meric P."/>
            <person name="Maglott D."/>
            <person name="Birtle Z."/>
            <person name="Marques A.C."/>
            <person name="Graves T."/>
            <person name="Zhou S."/>
            <person name="Teague B."/>
            <person name="Potamousis K."/>
            <person name="Churas C."/>
            <person name="Place M."/>
            <person name="Herschleb J."/>
            <person name="Runnheim R."/>
            <person name="Forrest D."/>
            <person name="Amos-Landgraf J."/>
            <person name="Schwartz D.C."/>
            <person name="Cheng Z."/>
            <person name="Lindblad-Toh K."/>
            <person name="Eichler E.E."/>
            <person name="Ponting C.P."/>
        </authorList>
    </citation>
    <scope>NUCLEOTIDE SEQUENCE [LARGE SCALE GENOMIC DNA]</scope>
    <source>
        <strain>C57BL/6J</strain>
    </source>
</reference>
<reference key="6">
    <citation type="journal article" date="2004" name="Genome Res.">
        <title>The status, quality, and expansion of the NIH full-length cDNA project: the Mammalian Gene Collection (MGC).</title>
        <authorList>
            <consortium name="The MGC Project Team"/>
        </authorList>
    </citation>
    <scope>NUCLEOTIDE SEQUENCE [LARGE SCALE MRNA]</scope>
    <source>
        <strain>C57BL/6J</strain>
        <tissue>Brain</tissue>
    </source>
</reference>
<reference key="7">
    <citation type="journal article" date="1997" name="J. Lipid Res.">
        <title>Adipose differentiation-related protein is an ubiquitously expressed lipid storage droplet-associated protein.</title>
        <authorList>
            <person name="Brasaemle D.L."/>
            <person name="Barber T."/>
            <person name="Wolins N.E."/>
            <person name="Serrero G."/>
            <person name="Blanchette-Mackie E.J."/>
            <person name="Londos C."/>
        </authorList>
    </citation>
    <scope>SUBCELLULAR LOCATION</scope>
</reference>
<reference key="8">
    <citation type="journal article" date="2003" name="J. Lipid Res.">
        <title>Lipid droplet targeting domains of adipophilin.</title>
        <authorList>
            <person name="McManaman J.L."/>
            <person name="Zabaronick W."/>
            <person name="Schaack J."/>
            <person name="Orlicky D.J."/>
        </authorList>
    </citation>
    <scope>FUNCTION</scope>
    <scope>SUBCELLULAR LOCATION</scope>
</reference>
<reference key="9">
    <citation type="journal article" date="2010" name="Cell">
        <title>A tissue-specific atlas of mouse protein phosphorylation and expression.</title>
        <authorList>
            <person name="Huttlin E.L."/>
            <person name="Jedrychowski M.P."/>
            <person name="Elias J.E."/>
            <person name="Goswami T."/>
            <person name="Rad R."/>
            <person name="Beausoleil S.A."/>
            <person name="Villen J."/>
            <person name="Haas W."/>
            <person name="Sowa M.E."/>
            <person name="Gygi S.P."/>
        </authorList>
    </citation>
    <scope>IDENTIFICATION BY MASS SPECTROMETRY [LARGE SCALE ANALYSIS]</scope>
    <source>
        <tissue>Brown adipose tissue</tissue>
        <tissue>Heart</tissue>
        <tissue>Liver</tissue>
        <tissue>Lung</tissue>
    </source>
</reference>
<reference key="10">
    <citation type="journal article" date="2023" name="FEBS Lett.">
        <title>The immunity-related GTPase IRGC mediates interaction between lipid droplets and mitochondria to facilitate sperm motility.</title>
        <authorList>
            <person name="Li J."/>
            <person name="Xu X."/>
            <person name="Liu J."/>
            <person name="Zhang S."/>
            <person name="Wang T."/>
            <person name="Liu Y."/>
            <person name="Wang Z."/>
        </authorList>
    </citation>
    <scope>INTERACTION WITH IRGC</scope>
</reference>
<name>PLIN2_MOUSE</name>
<feature type="initiator methionine" description="Removed" evidence="1">
    <location>
        <position position="1"/>
    </location>
</feature>
<feature type="chain" id="PRO_0000099889" description="Perilipin-2">
    <location>
        <begin position="2"/>
        <end position="425"/>
    </location>
</feature>
<feature type="modified residue" description="N-acetylalanine" evidence="1">
    <location>
        <position position="2"/>
    </location>
</feature>
<feature type="modified residue" description="Phosphoserine" evidence="1">
    <location>
        <position position="213"/>
    </location>
</feature>
<feature type="modified residue" description="Phosphotyrosine" evidence="1">
    <location>
        <position position="230"/>
    </location>
</feature>
<feature type="sequence conflict" description="In Ref. 1; AAA37176 and 2; L09734." evidence="10" ref="1 2">
    <original>L</original>
    <variation>M</variation>
    <location>
        <position position="183"/>
    </location>
</feature>
<sequence>MAAAVVDPQQSVVMRVANLPLVSSTYDLVSSAYVSTKDQYPYLRSVCEMAEKGVKTVTSAAMTSALPIIQKLEPQIAVANTYACKGLDRMEERLPILNQPTSEIVASARGAVTGAKDVVTTTMAGAKDSVASTVSGVVDKTKGAVTGSVERTKSVVNGSINTVLGMVQFMNSGVDNAITKSELLVDQYFPLTQEELEMEAKKVEGFDMVQKPSNYERLESLSTKLCSRAYHQALSRVKEAKQKSQETISQLHSTVHLIEFARKNMHSANQKIQGAQDKLYVSWVEWKRSIGYDDTDESHCVEHIESRTLAIARNLTQQLQTTCQTVLVNAQGLPQNIQDQAKHLGVMAGDIYSVFRNAASFKEVSDGVLTSSKGQLQKMKESLDEVMDYFVNNTPLNWLVGPFYPQSTEVNKASLKVQQSEVKAQ</sequence>
<accession>P43883</accession>
<accession>Q8K3Q8</accession>
<protein>
    <recommendedName>
        <fullName evidence="12">Perilipin-2</fullName>
    </recommendedName>
    <alternativeName>
        <fullName evidence="6">Adipophilin</fullName>
    </alternativeName>
    <alternativeName>
        <fullName evidence="7 9">Adipose differentiation-related protein</fullName>
        <shortName evidence="8 9">ADRP</shortName>
    </alternativeName>
</protein>
<comment type="function">
    <text evidence="2 11">Structural component of lipid droplets, which is required for the formation and maintenance of lipid storage droplets.</text>
</comment>
<comment type="subunit">
    <text evidence="4">Interacts with IRGC.</text>
</comment>
<comment type="interaction">
    <interactant intactId="EBI-16156700">
        <id>P43883</id>
    </interactant>
    <interactant intactId="EBI-433443">
        <id>P63017</id>
        <label>Hspa8</label>
    </interactant>
    <organismsDiffer>false</organismsDiffer>
    <experiments>3</experiments>
</comment>
<comment type="subcellular location">
    <subcellularLocation>
        <location evidence="11">Membrane</location>
        <topology evidence="11">Peripheral membrane protein</topology>
    </subcellularLocation>
    <subcellularLocation>
        <location evidence="2 5">Lipid droplet</location>
    </subcellularLocation>
</comment>
<comment type="tissue specificity">
    <text evidence="3">Adipose tissue specific. Expressed abundantly and preferentially in fat pads.</text>
</comment>
<comment type="induction">
    <text evidence="3">By dexamethasone.</text>
</comment>
<comment type="PTM">
    <text evidence="1">Acylated; primarily with C14, C16 and C18 fatty acids.</text>
</comment>
<comment type="PTM">
    <text evidence="1">Phosphorylation at Tyr-230 by isoform 1 of CHKA (CHKalpha2) promotes dissociation from lipid droplets: dissociation is followed by recruitment of autophagosome machinery to lipid droplets and subsequent lipid droplet lipolysis.</text>
</comment>
<comment type="PTM">
    <text evidence="1">Polyubiquitination of Nt-acetylatable A-PLIN2 by MARCHF6 lead to degradation by 26S proteasomes.</text>
</comment>
<comment type="similarity">
    <text evidence="10">Belongs to the perilipin family.</text>
</comment>
<dbReference type="EMBL" id="M93275">
    <property type="protein sequence ID" value="AAA37176.1"/>
    <property type="molecule type" value="mRNA"/>
</dbReference>
<dbReference type="EMBL" id="L09734">
    <property type="status" value="NOT_ANNOTATED_CDS"/>
    <property type="molecule type" value="Unassigned_DNA"/>
</dbReference>
<dbReference type="EMBL" id="AY035850">
    <property type="protein sequence ID" value="AAK63075.1"/>
    <property type="molecule type" value="mRNA"/>
</dbReference>
<dbReference type="EMBL" id="AK150177">
    <property type="protein sequence ID" value="BAE29361.1"/>
    <property type="molecule type" value="mRNA"/>
</dbReference>
<dbReference type="EMBL" id="AK152081">
    <property type="protein sequence ID" value="BAE30931.1"/>
    <property type="molecule type" value="mRNA"/>
</dbReference>
<dbReference type="EMBL" id="AK152263">
    <property type="protein sequence ID" value="BAE31081.1"/>
    <property type="molecule type" value="mRNA"/>
</dbReference>
<dbReference type="EMBL" id="AK153222">
    <property type="protein sequence ID" value="BAE31815.1"/>
    <property type="molecule type" value="mRNA"/>
</dbReference>
<dbReference type="EMBL" id="AK154582">
    <property type="protein sequence ID" value="BAE32690.1"/>
    <property type="molecule type" value="mRNA"/>
</dbReference>
<dbReference type="EMBL" id="AK167140">
    <property type="protein sequence ID" value="BAE39285.1"/>
    <property type="molecule type" value="mRNA"/>
</dbReference>
<dbReference type="EMBL" id="AL824707">
    <property type="status" value="NOT_ANNOTATED_CDS"/>
    <property type="molecule type" value="Genomic_DNA"/>
</dbReference>
<dbReference type="EMBL" id="BC054766">
    <property type="protein sequence ID" value="AAH54766.1"/>
    <property type="molecule type" value="mRNA"/>
</dbReference>
<dbReference type="CCDS" id="CCDS18308.1"/>
<dbReference type="PIR" id="A46251">
    <property type="entry name" value="A46251"/>
</dbReference>
<dbReference type="RefSeq" id="NP_001390640.1">
    <property type="nucleotide sequence ID" value="NM_001403711.1"/>
</dbReference>
<dbReference type="RefSeq" id="NP_001390641.1">
    <property type="nucleotide sequence ID" value="NM_001403712.1"/>
</dbReference>
<dbReference type="RefSeq" id="NP_001390642.1">
    <property type="nucleotide sequence ID" value="NM_001403713.1"/>
</dbReference>
<dbReference type="RefSeq" id="NP_001390643.1">
    <property type="nucleotide sequence ID" value="NM_001403714.1"/>
</dbReference>
<dbReference type="RefSeq" id="NP_001390644.1">
    <property type="nucleotide sequence ID" value="NM_001403715.1"/>
</dbReference>
<dbReference type="RefSeq" id="NP_031434.3">
    <property type="nucleotide sequence ID" value="NM_007408.3"/>
</dbReference>
<dbReference type="RefSeq" id="XP_006537620.1">
    <property type="nucleotide sequence ID" value="XM_006537557.1"/>
</dbReference>
<dbReference type="SMR" id="P43883"/>
<dbReference type="BioGRID" id="197983">
    <property type="interactions" value="4"/>
</dbReference>
<dbReference type="DIP" id="DIP-61639N"/>
<dbReference type="FunCoup" id="P43883">
    <property type="interactions" value="1112"/>
</dbReference>
<dbReference type="IntAct" id="P43883">
    <property type="interactions" value="1"/>
</dbReference>
<dbReference type="STRING" id="10090.ENSMUSP00000000466"/>
<dbReference type="GlyGen" id="P43883">
    <property type="glycosylation" value="9 sites, 1 O-linked glycan (9 sites)"/>
</dbReference>
<dbReference type="iPTMnet" id="P43883"/>
<dbReference type="PhosphoSitePlus" id="P43883"/>
<dbReference type="SwissPalm" id="P43883"/>
<dbReference type="jPOST" id="P43883"/>
<dbReference type="PaxDb" id="10090-ENSMUSP00000000466"/>
<dbReference type="PeptideAtlas" id="P43883"/>
<dbReference type="ProteomicsDB" id="289686"/>
<dbReference type="Pumba" id="P43883"/>
<dbReference type="Antibodypedia" id="24726">
    <property type="antibodies" value="963 antibodies from 38 providers"/>
</dbReference>
<dbReference type="DNASU" id="11520"/>
<dbReference type="Ensembl" id="ENSMUST00000000466.13">
    <property type="protein sequence ID" value="ENSMUSP00000000466.7"/>
    <property type="gene ID" value="ENSMUSG00000028494.13"/>
</dbReference>
<dbReference type="GeneID" id="11520"/>
<dbReference type="KEGG" id="mmu:11520"/>
<dbReference type="UCSC" id="uc008tlz.1">
    <property type="organism name" value="mouse"/>
</dbReference>
<dbReference type="AGR" id="MGI:87920"/>
<dbReference type="CTD" id="123"/>
<dbReference type="MGI" id="MGI:87920">
    <property type="gene designation" value="Plin2"/>
</dbReference>
<dbReference type="VEuPathDB" id="HostDB:ENSMUSG00000028494"/>
<dbReference type="eggNOG" id="ENOG502QRYF">
    <property type="taxonomic scope" value="Eukaryota"/>
</dbReference>
<dbReference type="GeneTree" id="ENSGT00950000182920"/>
<dbReference type="HOGENOM" id="CLU_035133_0_1_1"/>
<dbReference type="InParanoid" id="P43883"/>
<dbReference type="OMA" id="NQENCHE"/>
<dbReference type="PhylomeDB" id="P43883"/>
<dbReference type="TreeFam" id="TF328397"/>
<dbReference type="BioGRID-ORCS" id="11520">
    <property type="hits" value="2 hits in 84 CRISPR screens"/>
</dbReference>
<dbReference type="ChiTaRS" id="Plin2">
    <property type="organism name" value="mouse"/>
</dbReference>
<dbReference type="PRO" id="PR:P43883"/>
<dbReference type="Proteomes" id="UP000000589">
    <property type="component" value="Chromosome 4"/>
</dbReference>
<dbReference type="RNAct" id="P43883">
    <property type="molecule type" value="protein"/>
</dbReference>
<dbReference type="Bgee" id="ENSMUSG00000028494">
    <property type="expression patterns" value="Expressed in thoracic mammary gland and 264 other cell types or tissues"/>
</dbReference>
<dbReference type="ExpressionAtlas" id="P43883">
    <property type="expression patterns" value="baseline and differential"/>
</dbReference>
<dbReference type="GO" id="GO:0005737">
    <property type="term" value="C:cytoplasm"/>
    <property type="evidence" value="ECO:0000314"/>
    <property type="project" value="MGI"/>
</dbReference>
<dbReference type="GO" id="GO:0005829">
    <property type="term" value="C:cytosol"/>
    <property type="evidence" value="ECO:0000314"/>
    <property type="project" value="MGI"/>
</dbReference>
<dbReference type="GO" id="GO:0005811">
    <property type="term" value="C:lipid droplet"/>
    <property type="evidence" value="ECO:0000314"/>
    <property type="project" value="MGI"/>
</dbReference>
<dbReference type="GO" id="GO:0005634">
    <property type="term" value="C:nucleus"/>
    <property type="evidence" value="ECO:0000314"/>
    <property type="project" value="MGI"/>
</dbReference>
<dbReference type="GO" id="GO:0005886">
    <property type="term" value="C:plasma membrane"/>
    <property type="evidence" value="ECO:0000314"/>
    <property type="project" value="MGI"/>
</dbReference>
<dbReference type="GO" id="GO:0042149">
    <property type="term" value="P:cellular response to glucose starvation"/>
    <property type="evidence" value="ECO:0000250"/>
    <property type="project" value="UniProtKB"/>
</dbReference>
<dbReference type="GO" id="GO:1905691">
    <property type="term" value="P:lipid droplet disassembly"/>
    <property type="evidence" value="ECO:0000250"/>
    <property type="project" value="UniProtKB"/>
</dbReference>
<dbReference type="GO" id="GO:0019915">
    <property type="term" value="P:lipid storage"/>
    <property type="evidence" value="ECO:0000314"/>
    <property type="project" value="MGI"/>
</dbReference>
<dbReference type="GO" id="GO:0015909">
    <property type="term" value="P:long-chain fatty acid transport"/>
    <property type="evidence" value="ECO:0000314"/>
    <property type="project" value="MGI"/>
</dbReference>
<dbReference type="FunFam" id="3.30.720.170:FF:000004">
    <property type="entry name" value="Perilipin"/>
    <property type="match status" value="1"/>
</dbReference>
<dbReference type="Gene3D" id="1.20.120.340">
    <property type="entry name" value="Flagellar protein FliS"/>
    <property type="match status" value="1"/>
</dbReference>
<dbReference type="Gene3D" id="3.30.720.170">
    <property type="entry name" value="Perilipin, alpha-beta domain"/>
    <property type="match status" value="1"/>
</dbReference>
<dbReference type="InterPro" id="IPR004279">
    <property type="entry name" value="Perilipin"/>
</dbReference>
<dbReference type="PANTHER" id="PTHR14024">
    <property type="entry name" value="PERILIPIN"/>
    <property type="match status" value="1"/>
</dbReference>
<dbReference type="PANTHER" id="PTHR14024:SF25">
    <property type="entry name" value="PERILIPIN-2"/>
    <property type="match status" value="1"/>
</dbReference>
<dbReference type="Pfam" id="PF03036">
    <property type="entry name" value="Perilipin"/>
    <property type="match status" value="1"/>
</dbReference>
<dbReference type="PIRSF" id="PIRSF036881">
    <property type="entry name" value="PAT"/>
    <property type="match status" value="1"/>
</dbReference>
<dbReference type="SUPFAM" id="SSF109775">
    <property type="entry name" value="Mannose-6-phosphate receptor binding protein 1 (Tip47), C-terminal domain"/>
    <property type="match status" value="1"/>
</dbReference>
<evidence type="ECO:0000250" key="1">
    <source>
        <dbReference type="UniProtKB" id="Q99541"/>
    </source>
</evidence>
<evidence type="ECO:0000269" key="2">
    <source>
    </source>
</evidence>
<evidence type="ECO:0000269" key="3">
    <source>
    </source>
</evidence>
<evidence type="ECO:0000269" key="4">
    <source>
    </source>
</evidence>
<evidence type="ECO:0000269" key="5">
    <source>
    </source>
</evidence>
<evidence type="ECO:0000303" key="6">
    <source>
    </source>
</evidence>
<evidence type="ECO:0000303" key="7">
    <source>
    </source>
</evidence>
<evidence type="ECO:0000303" key="8">
    <source>
    </source>
</evidence>
<evidence type="ECO:0000303" key="9">
    <source>
    </source>
</evidence>
<evidence type="ECO:0000305" key="10"/>
<evidence type="ECO:0000305" key="11">
    <source>
    </source>
</evidence>
<evidence type="ECO:0000312" key="12">
    <source>
        <dbReference type="MGI" id="MGI:87920"/>
    </source>
</evidence>
<proteinExistence type="evidence at protein level"/>